<protein>
    <recommendedName>
        <fullName evidence="1">UDP-N-acetylenolpyruvoylglucosamine reductase</fullName>
        <ecNumber evidence="1">1.3.1.98</ecNumber>
    </recommendedName>
    <alternativeName>
        <fullName evidence="1">UDP-N-acetylmuramate dehydrogenase</fullName>
    </alternativeName>
</protein>
<feature type="chain" id="PRO_0000332500" description="UDP-N-acetylenolpyruvoylglucosamine reductase">
    <location>
        <begin position="1"/>
        <end position="363"/>
    </location>
</feature>
<feature type="domain" description="FAD-binding PCMH-type" evidence="1">
    <location>
        <begin position="27"/>
        <end position="197"/>
    </location>
</feature>
<feature type="active site" evidence="1">
    <location>
        <position position="175"/>
    </location>
</feature>
<feature type="active site" description="Proton donor" evidence="1">
    <location>
        <position position="252"/>
    </location>
</feature>
<feature type="active site" evidence="1">
    <location>
        <position position="355"/>
    </location>
</feature>
<organism>
    <name type="scientific">Salinispora arenicola (strain CNS-205)</name>
    <dbReference type="NCBI Taxonomy" id="391037"/>
    <lineage>
        <taxon>Bacteria</taxon>
        <taxon>Bacillati</taxon>
        <taxon>Actinomycetota</taxon>
        <taxon>Actinomycetes</taxon>
        <taxon>Micromonosporales</taxon>
        <taxon>Micromonosporaceae</taxon>
        <taxon>Salinispora</taxon>
    </lineage>
</organism>
<reference key="1">
    <citation type="submission" date="2007-10" db="EMBL/GenBank/DDBJ databases">
        <title>Complete sequence of Salinispora arenicola CNS-205.</title>
        <authorList>
            <consortium name="US DOE Joint Genome Institute"/>
            <person name="Copeland A."/>
            <person name="Lucas S."/>
            <person name="Lapidus A."/>
            <person name="Barry K."/>
            <person name="Glavina del Rio T."/>
            <person name="Dalin E."/>
            <person name="Tice H."/>
            <person name="Pitluck S."/>
            <person name="Foster B."/>
            <person name="Schmutz J."/>
            <person name="Larimer F."/>
            <person name="Land M."/>
            <person name="Hauser L."/>
            <person name="Kyrpides N."/>
            <person name="Ivanova N."/>
            <person name="Jensen P.R."/>
            <person name="Moore B.S."/>
            <person name="Penn K."/>
            <person name="Jenkins C."/>
            <person name="Udwary D."/>
            <person name="Xiang L."/>
            <person name="Gontang E."/>
            <person name="Richardson P."/>
        </authorList>
    </citation>
    <scope>NUCLEOTIDE SEQUENCE [LARGE SCALE GENOMIC DNA]</scope>
    <source>
        <strain>CNS-205</strain>
    </source>
</reference>
<name>MURB_SALAI</name>
<comment type="function">
    <text evidence="1">Cell wall formation.</text>
</comment>
<comment type="catalytic activity">
    <reaction evidence="1">
        <text>UDP-N-acetyl-alpha-D-muramate + NADP(+) = UDP-N-acetyl-3-O-(1-carboxyvinyl)-alpha-D-glucosamine + NADPH + H(+)</text>
        <dbReference type="Rhea" id="RHEA:12248"/>
        <dbReference type="ChEBI" id="CHEBI:15378"/>
        <dbReference type="ChEBI" id="CHEBI:57783"/>
        <dbReference type="ChEBI" id="CHEBI:58349"/>
        <dbReference type="ChEBI" id="CHEBI:68483"/>
        <dbReference type="ChEBI" id="CHEBI:70757"/>
        <dbReference type="EC" id="1.3.1.98"/>
    </reaction>
</comment>
<comment type="cofactor">
    <cofactor evidence="1">
        <name>FAD</name>
        <dbReference type="ChEBI" id="CHEBI:57692"/>
    </cofactor>
</comment>
<comment type="pathway">
    <text evidence="1">Cell wall biogenesis; peptidoglycan biosynthesis.</text>
</comment>
<comment type="subcellular location">
    <subcellularLocation>
        <location evidence="1">Cytoplasm</location>
    </subcellularLocation>
</comment>
<comment type="similarity">
    <text evidence="1">Belongs to the MurB family.</text>
</comment>
<gene>
    <name evidence="1" type="primary">murB</name>
    <name type="ordered locus">Sare_0395</name>
</gene>
<keyword id="KW-0131">Cell cycle</keyword>
<keyword id="KW-0132">Cell division</keyword>
<keyword id="KW-0133">Cell shape</keyword>
<keyword id="KW-0961">Cell wall biogenesis/degradation</keyword>
<keyword id="KW-0963">Cytoplasm</keyword>
<keyword id="KW-0274">FAD</keyword>
<keyword id="KW-0285">Flavoprotein</keyword>
<keyword id="KW-0521">NADP</keyword>
<keyword id="KW-0560">Oxidoreductase</keyword>
<keyword id="KW-0573">Peptidoglycan synthesis</keyword>
<proteinExistence type="inferred from homology"/>
<dbReference type="EC" id="1.3.1.98" evidence="1"/>
<dbReference type="EMBL" id="CP000850">
    <property type="protein sequence ID" value="ABV96324.1"/>
    <property type="molecule type" value="Genomic_DNA"/>
</dbReference>
<dbReference type="SMR" id="A8LZF8"/>
<dbReference type="STRING" id="391037.Sare_0395"/>
<dbReference type="KEGG" id="saq:Sare_0395"/>
<dbReference type="eggNOG" id="COG0812">
    <property type="taxonomic scope" value="Bacteria"/>
</dbReference>
<dbReference type="HOGENOM" id="CLU_035304_0_1_11"/>
<dbReference type="UniPathway" id="UPA00219"/>
<dbReference type="GO" id="GO:0005829">
    <property type="term" value="C:cytosol"/>
    <property type="evidence" value="ECO:0007669"/>
    <property type="project" value="TreeGrafter"/>
</dbReference>
<dbReference type="GO" id="GO:0071949">
    <property type="term" value="F:FAD binding"/>
    <property type="evidence" value="ECO:0007669"/>
    <property type="project" value="InterPro"/>
</dbReference>
<dbReference type="GO" id="GO:0008762">
    <property type="term" value="F:UDP-N-acetylmuramate dehydrogenase activity"/>
    <property type="evidence" value="ECO:0007669"/>
    <property type="project" value="UniProtKB-UniRule"/>
</dbReference>
<dbReference type="GO" id="GO:0051301">
    <property type="term" value="P:cell division"/>
    <property type="evidence" value="ECO:0007669"/>
    <property type="project" value="UniProtKB-KW"/>
</dbReference>
<dbReference type="GO" id="GO:0071555">
    <property type="term" value="P:cell wall organization"/>
    <property type="evidence" value="ECO:0007669"/>
    <property type="project" value="UniProtKB-KW"/>
</dbReference>
<dbReference type="GO" id="GO:0009252">
    <property type="term" value="P:peptidoglycan biosynthetic process"/>
    <property type="evidence" value="ECO:0007669"/>
    <property type="project" value="UniProtKB-UniRule"/>
</dbReference>
<dbReference type="GO" id="GO:0008360">
    <property type="term" value="P:regulation of cell shape"/>
    <property type="evidence" value="ECO:0007669"/>
    <property type="project" value="UniProtKB-KW"/>
</dbReference>
<dbReference type="Gene3D" id="3.30.465.10">
    <property type="match status" value="1"/>
</dbReference>
<dbReference type="Gene3D" id="3.90.78.10">
    <property type="entry name" value="UDP-N-acetylenolpyruvoylglucosamine reductase, C-terminal domain"/>
    <property type="match status" value="1"/>
</dbReference>
<dbReference type="Gene3D" id="3.30.43.10">
    <property type="entry name" value="Uridine Diphospho-n-acetylenolpyruvylglucosamine Reductase, domain 2"/>
    <property type="match status" value="1"/>
</dbReference>
<dbReference type="HAMAP" id="MF_00037">
    <property type="entry name" value="MurB"/>
    <property type="match status" value="1"/>
</dbReference>
<dbReference type="InterPro" id="IPR016166">
    <property type="entry name" value="FAD-bd_PCMH"/>
</dbReference>
<dbReference type="InterPro" id="IPR036318">
    <property type="entry name" value="FAD-bd_PCMH-like_sf"/>
</dbReference>
<dbReference type="InterPro" id="IPR016167">
    <property type="entry name" value="FAD-bd_PCMH_sub1"/>
</dbReference>
<dbReference type="InterPro" id="IPR016169">
    <property type="entry name" value="FAD-bd_PCMH_sub2"/>
</dbReference>
<dbReference type="InterPro" id="IPR003170">
    <property type="entry name" value="MurB"/>
</dbReference>
<dbReference type="InterPro" id="IPR011601">
    <property type="entry name" value="MurB_C"/>
</dbReference>
<dbReference type="InterPro" id="IPR036635">
    <property type="entry name" value="MurB_C_sf"/>
</dbReference>
<dbReference type="InterPro" id="IPR006094">
    <property type="entry name" value="Oxid_FAD_bind_N"/>
</dbReference>
<dbReference type="NCBIfam" id="NF010478">
    <property type="entry name" value="PRK13903.1"/>
    <property type="match status" value="1"/>
</dbReference>
<dbReference type="PANTHER" id="PTHR21071">
    <property type="entry name" value="UDP-N-ACETYLENOLPYRUVOYLGLUCOSAMINE REDUCTASE"/>
    <property type="match status" value="1"/>
</dbReference>
<dbReference type="PANTHER" id="PTHR21071:SF4">
    <property type="entry name" value="UDP-N-ACETYLENOLPYRUVOYLGLUCOSAMINE REDUCTASE"/>
    <property type="match status" value="1"/>
</dbReference>
<dbReference type="Pfam" id="PF01565">
    <property type="entry name" value="FAD_binding_4"/>
    <property type="match status" value="1"/>
</dbReference>
<dbReference type="Pfam" id="PF02873">
    <property type="entry name" value="MurB_C"/>
    <property type="match status" value="1"/>
</dbReference>
<dbReference type="SUPFAM" id="SSF56176">
    <property type="entry name" value="FAD-binding/transporter-associated domain-like"/>
    <property type="match status" value="1"/>
</dbReference>
<dbReference type="SUPFAM" id="SSF56194">
    <property type="entry name" value="Uridine diphospho-N-Acetylenolpyruvylglucosamine reductase, MurB, C-terminal domain"/>
    <property type="match status" value="1"/>
</dbReference>
<dbReference type="PROSITE" id="PS51387">
    <property type="entry name" value="FAD_PCMH"/>
    <property type="match status" value="1"/>
</dbReference>
<sequence length="363" mass="38787">MSEVPQSTSDVHPDAECHLSRYTTLRLGGWATRVVTATSADDLVRGVREAGDRGERILVLAGGSNVVIGDAGFPGTVVLVRSRGLKVIETDTDTVTVRVEAGEPWDELVAHTVANEWSGLECLSGIPGSTGATPIQNVGAYGQEVAETITGVQVYDRVTGTTARIEARDCGFSYRSSIFKRSDRWVVLSVDFRLARSPLSGPVRYAELARALDVAVGDRVPLAKARAAVLRLRAGKGMVLDAADPDTWSVGSFFTNPVLDRAGYERLRERAADVGEPPSWPGTDGTVKVSAAWLIDKSGFGKGHPGPAGVVTISTKHTLALTHRSGTARTEDLVRLAREIRRGVQARFGVTLHPEPVLVNCAL</sequence>
<evidence type="ECO:0000255" key="1">
    <source>
        <dbReference type="HAMAP-Rule" id="MF_00037"/>
    </source>
</evidence>
<accession>A8LZF8</accession>